<dbReference type="EC" id="1.8.4.11" evidence="1"/>
<dbReference type="EMBL" id="AM408590">
    <property type="protein sequence ID" value="CAL70157.1"/>
    <property type="molecule type" value="Genomic_DNA"/>
</dbReference>
<dbReference type="RefSeq" id="WP_003400942.1">
    <property type="nucleotide sequence ID" value="NC_008769.1"/>
</dbReference>
<dbReference type="SMR" id="A1KEV7"/>
<dbReference type="GeneID" id="45424103"/>
<dbReference type="KEGG" id="mbb:BCG_0173c"/>
<dbReference type="HOGENOM" id="CLU_031040_10_2_11"/>
<dbReference type="Proteomes" id="UP000001472">
    <property type="component" value="Chromosome"/>
</dbReference>
<dbReference type="GO" id="GO:0033744">
    <property type="term" value="F:L-methionine:thioredoxin-disulfide S-oxidoreductase activity"/>
    <property type="evidence" value="ECO:0007669"/>
    <property type="project" value="RHEA"/>
</dbReference>
<dbReference type="GO" id="GO:0008113">
    <property type="term" value="F:peptide-methionine (S)-S-oxide reductase activity"/>
    <property type="evidence" value="ECO:0007669"/>
    <property type="project" value="UniProtKB-UniRule"/>
</dbReference>
<dbReference type="GO" id="GO:0036211">
    <property type="term" value="P:protein modification process"/>
    <property type="evidence" value="ECO:0007669"/>
    <property type="project" value="UniProtKB-UniRule"/>
</dbReference>
<dbReference type="FunFam" id="3.30.1060.10:FF:000005">
    <property type="entry name" value="Peptide methionine sulfoxide reductase MsrA"/>
    <property type="match status" value="1"/>
</dbReference>
<dbReference type="Gene3D" id="3.30.1060.10">
    <property type="entry name" value="Peptide methionine sulphoxide reductase MsrA"/>
    <property type="match status" value="1"/>
</dbReference>
<dbReference type="HAMAP" id="MF_01401">
    <property type="entry name" value="MsrA"/>
    <property type="match status" value="1"/>
</dbReference>
<dbReference type="InterPro" id="IPR002569">
    <property type="entry name" value="Met_Sox_Rdtase_MsrA_dom"/>
</dbReference>
<dbReference type="InterPro" id="IPR036509">
    <property type="entry name" value="Met_Sox_Rdtase_MsrA_sf"/>
</dbReference>
<dbReference type="NCBIfam" id="TIGR00401">
    <property type="entry name" value="msrA"/>
    <property type="match status" value="1"/>
</dbReference>
<dbReference type="PANTHER" id="PTHR43774">
    <property type="entry name" value="PEPTIDE METHIONINE SULFOXIDE REDUCTASE"/>
    <property type="match status" value="1"/>
</dbReference>
<dbReference type="PANTHER" id="PTHR43774:SF1">
    <property type="entry name" value="PEPTIDE METHIONINE SULFOXIDE REDUCTASE MSRA 2"/>
    <property type="match status" value="1"/>
</dbReference>
<dbReference type="Pfam" id="PF01625">
    <property type="entry name" value="PMSR"/>
    <property type="match status" value="1"/>
</dbReference>
<dbReference type="SUPFAM" id="SSF55068">
    <property type="entry name" value="Peptide methionine sulfoxide reductase"/>
    <property type="match status" value="1"/>
</dbReference>
<evidence type="ECO:0000255" key="1">
    <source>
        <dbReference type="HAMAP-Rule" id="MF_01401"/>
    </source>
</evidence>
<proteinExistence type="inferred from homology"/>
<name>MSRA_MYCBP</name>
<sequence length="182" mass="20485">MTSNQKAILAGGCFWGLQDLIRNQPGVVSTRVGYSGGNIPNATYRNHGTHAEAVEIIFDPTVTDYRTLLEFFFQIHDPTTKDRQGNDRGTSYRSAIFYFDEQQKRIALDTIADVEASGLWPGKVVTEVSPAGDFWEAEPEHQDYLQRYPNGYTCHFVRPGWRLPRRTAESALRASLSPELGT</sequence>
<accession>A1KEV7</accession>
<gene>
    <name evidence="1" type="primary">msrA</name>
    <name type="ordered locus">BCG_0173c</name>
</gene>
<feature type="chain" id="PRO_1000068342" description="Peptide methionine sulfoxide reductase MsrA">
    <location>
        <begin position="1"/>
        <end position="182"/>
    </location>
</feature>
<feature type="active site" evidence="1">
    <location>
        <position position="13"/>
    </location>
</feature>
<reference key="1">
    <citation type="journal article" date="2007" name="Proc. Natl. Acad. Sci. U.S.A.">
        <title>Genome plasticity of BCG and impact on vaccine efficacy.</title>
        <authorList>
            <person name="Brosch R."/>
            <person name="Gordon S.V."/>
            <person name="Garnier T."/>
            <person name="Eiglmeier K."/>
            <person name="Frigui W."/>
            <person name="Valenti P."/>
            <person name="Dos Santos S."/>
            <person name="Duthoy S."/>
            <person name="Lacroix C."/>
            <person name="Garcia-Pelayo C."/>
            <person name="Inwald J.K."/>
            <person name="Golby P."/>
            <person name="Garcia J.N."/>
            <person name="Hewinson R.G."/>
            <person name="Behr M.A."/>
            <person name="Quail M.A."/>
            <person name="Churcher C."/>
            <person name="Barrell B.G."/>
            <person name="Parkhill J."/>
            <person name="Cole S.T."/>
        </authorList>
    </citation>
    <scope>NUCLEOTIDE SEQUENCE [LARGE SCALE GENOMIC DNA]</scope>
    <source>
        <strain>BCG / Pasteur 1173P2</strain>
    </source>
</reference>
<comment type="function">
    <text evidence="1">Has an important function as a repair enzyme for proteins that have been inactivated by oxidation. Catalyzes the reversible oxidation-reduction of methionine sulfoxide in proteins to methionine.</text>
</comment>
<comment type="catalytic activity">
    <reaction evidence="1">
        <text>L-methionyl-[protein] + [thioredoxin]-disulfide + H2O = L-methionyl-(S)-S-oxide-[protein] + [thioredoxin]-dithiol</text>
        <dbReference type="Rhea" id="RHEA:14217"/>
        <dbReference type="Rhea" id="RHEA-COMP:10698"/>
        <dbReference type="Rhea" id="RHEA-COMP:10700"/>
        <dbReference type="Rhea" id="RHEA-COMP:12313"/>
        <dbReference type="Rhea" id="RHEA-COMP:12315"/>
        <dbReference type="ChEBI" id="CHEBI:15377"/>
        <dbReference type="ChEBI" id="CHEBI:16044"/>
        <dbReference type="ChEBI" id="CHEBI:29950"/>
        <dbReference type="ChEBI" id="CHEBI:44120"/>
        <dbReference type="ChEBI" id="CHEBI:50058"/>
        <dbReference type="EC" id="1.8.4.11"/>
    </reaction>
</comment>
<comment type="catalytic activity">
    <reaction evidence="1">
        <text>[thioredoxin]-disulfide + L-methionine + H2O = L-methionine (S)-S-oxide + [thioredoxin]-dithiol</text>
        <dbReference type="Rhea" id="RHEA:19993"/>
        <dbReference type="Rhea" id="RHEA-COMP:10698"/>
        <dbReference type="Rhea" id="RHEA-COMP:10700"/>
        <dbReference type="ChEBI" id="CHEBI:15377"/>
        <dbReference type="ChEBI" id="CHEBI:29950"/>
        <dbReference type="ChEBI" id="CHEBI:50058"/>
        <dbReference type="ChEBI" id="CHEBI:57844"/>
        <dbReference type="ChEBI" id="CHEBI:58772"/>
        <dbReference type="EC" id="1.8.4.11"/>
    </reaction>
</comment>
<comment type="similarity">
    <text evidence="1">Belongs to the MsrA Met sulfoxide reductase family.</text>
</comment>
<organism>
    <name type="scientific">Mycobacterium bovis (strain BCG / Pasteur 1173P2)</name>
    <dbReference type="NCBI Taxonomy" id="410289"/>
    <lineage>
        <taxon>Bacteria</taxon>
        <taxon>Bacillati</taxon>
        <taxon>Actinomycetota</taxon>
        <taxon>Actinomycetes</taxon>
        <taxon>Mycobacteriales</taxon>
        <taxon>Mycobacteriaceae</taxon>
        <taxon>Mycobacterium</taxon>
        <taxon>Mycobacterium tuberculosis complex</taxon>
    </lineage>
</organism>
<keyword id="KW-0560">Oxidoreductase</keyword>
<protein>
    <recommendedName>
        <fullName evidence="1">Peptide methionine sulfoxide reductase MsrA</fullName>
        <shortName evidence="1">Protein-methionine-S-oxide reductase</shortName>
        <ecNumber evidence="1">1.8.4.11</ecNumber>
    </recommendedName>
    <alternativeName>
        <fullName evidence="1">Peptide-methionine (S)-S-oxide reductase</fullName>
        <shortName evidence="1">Peptide Met(O) reductase</shortName>
    </alternativeName>
</protein>